<sequence>MNPEYDYLFKLLLIGDSGVGKSCLLLRFADDSYLDSYISTIGVDFKIRTVEQDGKTIKLQIWDTAGQERFRTITSSYYRGAHGIIIVYDVTDQESFNNVKQWLNEIDRYASDNVNKLLVGNKSDLTANKVVATETAKAFADEMGIPFMETSAKNATNVQQAFMAMAASIKDRMASQPAAANARPATVQIRGQPVNQKTSCCSS</sequence>
<feature type="chain" id="PRO_0000121298" description="GTP-binding protein YPTM2">
    <location>
        <begin position="1"/>
        <end position="203"/>
    </location>
</feature>
<feature type="short sequence motif" description="Effector region" evidence="3">
    <location>
        <begin position="37"/>
        <end position="45"/>
    </location>
</feature>
<feature type="binding site" evidence="2">
    <location>
        <begin position="15"/>
        <end position="23"/>
    </location>
    <ligand>
        <name>GTP</name>
        <dbReference type="ChEBI" id="CHEBI:37565"/>
    </ligand>
</feature>
<feature type="binding site" evidence="2">
    <location>
        <begin position="33"/>
        <end position="40"/>
    </location>
    <ligand>
        <name>GTP</name>
        <dbReference type="ChEBI" id="CHEBI:37565"/>
    </ligand>
</feature>
<feature type="binding site" evidence="2">
    <location>
        <begin position="63"/>
        <end position="67"/>
    </location>
    <ligand>
        <name>GTP</name>
        <dbReference type="ChEBI" id="CHEBI:37565"/>
    </ligand>
</feature>
<feature type="binding site" evidence="2">
    <location>
        <begin position="121"/>
        <end position="124"/>
    </location>
    <ligand>
        <name>GTP</name>
        <dbReference type="ChEBI" id="CHEBI:37565"/>
    </ligand>
</feature>
<feature type="binding site" evidence="2">
    <location>
        <begin position="151"/>
        <end position="153"/>
    </location>
    <ligand>
        <name>GTP</name>
        <dbReference type="ChEBI" id="CHEBI:37565"/>
    </ligand>
</feature>
<feature type="lipid moiety-binding region" description="S-geranylgeranyl cysteine" evidence="1">
    <location>
        <position position="200"/>
    </location>
</feature>
<feature type="lipid moiety-binding region" description="S-geranylgeranyl cysteine" evidence="1">
    <location>
        <position position="201"/>
    </location>
</feature>
<protein>
    <recommendedName>
        <fullName>GTP-binding protein YPTM2</fullName>
    </recommendedName>
</protein>
<evidence type="ECO:0000250" key="1"/>
<evidence type="ECO:0000250" key="2">
    <source>
        <dbReference type="UniProtKB" id="P62820"/>
    </source>
</evidence>
<evidence type="ECO:0000305" key="3"/>
<keyword id="KW-1003">Cell membrane</keyword>
<keyword id="KW-0342">GTP-binding</keyword>
<keyword id="KW-0449">Lipoprotein</keyword>
<keyword id="KW-0472">Membrane</keyword>
<keyword id="KW-0547">Nucleotide-binding</keyword>
<keyword id="KW-0636">Prenylation</keyword>
<keyword id="KW-0653">Protein transport</keyword>
<keyword id="KW-1185">Reference proteome</keyword>
<keyword id="KW-0813">Transport</keyword>
<proteinExistence type="evidence at transcript level"/>
<comment type="function">
    <text evidence="1">Protein transport. Probably involved in vesicular traffic (By similarity).</text>
</comment>
<comment type="subcellular location">
    <subcellularLocation>
        <location evidence="3">Cell membrane</location>
        <topology evidence="3">Lipid-anchor</topology>
        <orientation evidence="3">Cytoplasmic side</orientation>
    </subcellularLocation>
</comment>
<comment type="tissue specificity">
    <text>Its expression is weak in stems, higher in roots, leaves and coleoptiles, but highest in flowers.</text>
</comment>
<comment type="similarity">
    <text evidence="3">Belongs to the small GTPase superfamily. Rab family.</text>
</comment>
<name>YPTM2_MAIZE</name>
<organism>
    <name type="scientific">Zea mays</name>
    <name type="common">Maize</name>
    <dbReference type="NCBI Taxonomy" id="4577"/>
    <lineage>
        <taxon>Eukaryota</taxon>
        <taxon>Viridiplantae</taxon>
        <taxon>Streptophyta</taxon>
        <taxon>Embryophyta</taxon>
        <taxon>Tracheophyta</taxon>
        <taxon>Spermatophyta</taxon>
        <taxon>Magnoliopsida</taxon>
        <taxon>Liliopsida</taxon>
        <taxon>Poales</taxon>
        <taxon>Poaceae</taxon>
        <taxon>PACMAD clade</taxon>
        <taxon>Panicoideae</taxon>
        <taxon>Andropogonodae</taxon>
        <taxon>Andropogoneae</taxon>
        <taxon>Tripsacinae</taxon>
        <taxon>Zea</taxon>
    </lineage>
</organism>
<gene>
    <name type="primary">YPTM2</name>
</gene>
<dbReference type="EMBL" id="X63278">
    <property type="protein sequence ID" value="CAA44919.1"/>
    <property type="molecule type" value="mRNA"/>
</dbReference>
<dbReference type="PIR" id="B38202">
    <property type="entry name" value="B38202"/>
</dbReference>
<dbReference type="RefSeq" id="NP_001105441.1">
    <property type="nucleotide sequence ID" value="NM_001111971.1"/>
</dbReference>
<dbReference type="SMR" id="Q05737"/>
<dbReference type="FunCoup" id="Q05737">
    <property type="interactions" value="3570"/>
</dbReference>
<dbReference type="STRING" id="4577.Q05737"/>
<dbReference type="PaxDb" id="4577-GRMZM2G097728_P03"/>
<dbReference type="GeneID" id="542396"/>
<dbReference type="KEGG" id="zma:542396"/>
<dbReference type="MaizeGDB" id="78605"/>
<dbReference type="eggNOG" id="KOG0084">
    <property type="taxonomic scope" value="Eukaryota"/>
</dbReference>
<dbReference type="InParanoid" id="Q05737"/>
<dbReference type="OrthoDB" id="9989112at2759"/>
<dbReference type="Proteomes" id="UP000007305">
    <property type="component" value="Unplaced"/>
</dbReference>
<dbReference type="ExpressionAtlas" id="Q05737">
    <property type="expression patterns" value="baseline and differential"/>
</dbReference>
<dbReference type="GO" id="GO:0005886">
    <property type="term" value="C:plasma membrane"/>
    <property type="evidence" value="ECO:0007669"/>
    <property type="project" value="UniProtKB-SubCell"/>
</dbReference>
<dbReference type="GO" id="GO:0005525">
    <property type="term" value="F:GTP binding"/>
    <property type="evidence" value="ECO:0000318"/>
    <property type="project" value="GO_Central"/>
</dbReference>
<dbReference type="GO" id="GO:0003924">
    <property type="term" value="F:GTPase activity"/>
    <property type="evidence" value="ECO:0000318"/>
    <property type="project" value="GO_Central"/>
</dbReference>
<dbReference type="GO" id="GO:0015031">
    <property type="term" value="P:protein transport"/>
    <property type="evidence" value="ECO:0007669"/>
    <property type="project" value="UniProtKB-KW"/>
</dbReference>
<dbReference type="GO" id="GO:0016192">
    <property type="term" value="P:vesicle-mediated transport"/>
    <property type="evidence" value="ECO:0000318"/>
    <property type="project" value="GO_Central"/>
</dbReference>
<dbReference type="CDD" id="cd01869">
    <property type="entry name" value="Rab1_Ypt1"/>
    <property type="match status" value="1"/>
</dbReference>
<dbReference type="FunFam" id="3.40.50.300:FF:000359">
    <property type="entry name" value="Small GTP-binding protein"/>
    <property type="match status" value="1"/>
</dbReference>
<dbReference type="Gene3D" id="3.40.50.300">
    <property type="entry name" value="P-loop containing nucleotide triphosphate hydrolases"/>
    <property type="match status" value="1"/>
</dbReference>
<dbReference type="InterPro" id="IPR027417">
    <property type="entry name" value="P-loop_NTPase"/>
</dbReference>
<dbReference type="InterPro" id="IPR050227">
    <property type="entry name" value="Rab"/>
</dbReference>
<dbReference type="InterPro" id="IPR005225">
    <property type="entry name" value="Small_GTP-bd"/>
</dbReference>
<dbReference type="InterPro" id="IPR001806">
    <property type="entry name" value="Small_GTPase"/>
</dbReference>
<dbReference type="NCBIfam" id="TIGR00231">
    <property type="entry name" value="small_GTP"/>
    <property type="match status" value="1"/>
</dbReference>
<dbReference type="PANTHER" id="PTHR47977">
    <property type="entry name" value="RAS-RELATED PROTEIN RAB"/>
    <property type="match status" value="1"/>
</dbReference>
<dbReference type="Pfam" id="PF00071">
    <property type="entry name" value="Ras"/>
    <property type="match status" value="1"/>
</dbReference>
<dbReference type="PRINTS" id="PR00449">
    <property type="entry name" value="RASTRNSFRMNG"/>
</dbReference>
<dbReference type="SMART" id="SM00177">
    <property type="entry name" value="ARF"/>
    <property type="match status" value="1"/>
</dbReference>
<dbReference type="SMART" id="SM00175">
    <property type="entry name" value="RAB"/>
    <property type="match status" value="1"/>
</dbReference>
<dbReference type="SMART" id="SM00176">
    <property type="entry name" value="RAN"/>
    <property type="match status" value="1"/>
</dbReference>
<dbReference type="SMART" id="SM00173">
    <property type="entry name" value="RAS"/>
    <property type="match status" value="1"/>
</dbReference>
<dbReference type="SMART" id="SM00174">
    <property type="entry name" value="RHO"/>
    <property type="match status" value="1"/>
</dbReference>
<dbReference type="SUPFAM" id="SSF52540">
    <property type="entry name" value="P-loop containing nucleoside triphosphate hydrolases"/>
    <property type="match status" value="1"/>
</dbReference>
<dbReference type="PROSITE" id="PS51419">
    <property type="entry name" value="RAB"/>
    <property type="match status" value="1"/>
</dbReference>
<reference key="1">
    <citation type="journal article" date="1992" name="Proc. Natl. Acad. Sci. U.S.A.">
        <title>Molecular cloning and structural analysis of genes from Zea mays (L.) coding for members of the ras-related ypt gene family.</title>
        <authorList>
            <person name="Palme K."/>
            <person name="Diefenthal T."/>
            <person name="Vingron M."/>
            <person name="Sander C."/>
            <person name="Schell J."/>
        </authorList>
    </citation>
    <scope>NUCLEOTIDE SEQUENCE [MRNA]</scope>
    <source>
        <tissue>Coleoptile</tissue>
    </source>
</reference>
<accession>Q05737</accession>